<dbReference type="EMBL" id="AY261366">
    <property type="status" value="NOT_ANNOTATED_CDS"/>
    <property type="molecule type" value="Genomic_DNA"/>
</dbReference>
<dbReference type="Proteomes" id="UP000000858">
    <property type="component" value="Segment"/>
</dbReference>
<evidence type="ECO:0000250" key="1"/>
<evidence type="ECO:0000305" key="2"/>
<reference key="1">
    <citation type="submission" date="2003-03" db="EMBL/GenBank/DDBJ databases">
        <title>African swine fever virus genomes.</title>
        <authorList>
            <person name="Kutish G.F."/>
            <person name="Rock D.L."/>
        </authorList>
    </citation>
    <scope>NUCLEOTIDE SEQUENCE [LARGE SCALE GENOMIC DNA]</scope>
</reference>
<sequence length="160" mass="18206">MITLYEAAIKTLITHRKQILKHPDSREILLALGLYWDKTHILLKCHECGKMSLTGKHSTKCININCLLILAIKKKNKRMVDTLIRMGADVTYIHLLKNKIKLSYNQLSMLKSNSQIALKELHAICYLLYGRLPKKIKQGMQLCKTMAGLCGELLCAFLAP</sequence>
<organismHost>
    <name type="scientific">Ornithodoros</name>
    <name type="common">relapsing fever ticks</name>
    <dbReference type="NCBI Taxonomy" id="6937"/>
</organismHost>
<organismHost>
    <name type="scientific">Phacochoerus aethiopicus</name>
    <name type="common">Warthog</name>
    <dbReference type="NCBI Taxonomy" id="85517"/>
</organismHost>
<organismHost>
    <name type="scientific">Phacochoerus africanus</name>
    <name type="common">Warthog</name>
    <dbReference type="NCBI Taxonomy" id="41426"/>
</organismHost>
<organismHost>
    <name type="scientific">Potamochoerus larvatus</name>
    <name type="common">Bushpig</name>
    <dbReference type="NCBI Taxonomy" id="273792"/>
</organismHost>
<organismHost>
    <name type="scientific">Sus scrofa</name>
    <name type="common">Pig</name>
    <dbReference type="NCBI Taxonomy" id="9823"/>
</organismHost>
<name>3002R_ASFWA</name>
<comment type="function">
    <text evidence="1">Plays a role in virus cell tropism, and may be required for efficient virus replication in macrophages.</text>
</comment>
<comment type="similarity">
    <text evidence="2">Belongs to the asfivirus MGF 300 family.</text>
</comment>
<protein>
    <recommendedName>
        <fullName>Protein MGF 300-2R</fullName>
    </recommendedName>
</protein>
<feature type="chain" id="PRO_0000373232" description="Protein MGF 300-2R">
    <location>
        <begin position="1"/>
        <end position="160"/>
    </location>
</feature>
<accession>P0C9K8</accession>
<organism>
    <name type="scientific">African swine fever virus (isolate Warthog/Namibia/Wart80/1980)</name>
    <name type="common">ASFV</name>
    <dbReference type="NCBI Taxonomy" id="561444"/>
    <lineage>
        <taxon>Viruses</taxon>
        <taxon>Varidnaviria</taxon>
        <taxon>Bamfordvirae</taxon>
        <taxon>Nucleocytoviricota</taxon>
        <taxon>Pokkesviricetes</taxon>
        <taxon>Asfuvirales</taxon>
        <taxon>Asfarviridae</taxon>
        <taxon>Asfivirus</taxon>
        <taxon>African swine fever virus</taxon>
    </lineage>
</organism>
<proteinExistence type="inferred from homology"/>
<gene>
    <name type="ordered locus">War-026</name>
</gene>